<evidence type="ECO:0000255" key="1"/>
<evidence type="ECO:0000256" key="2">
    <source>
        <dbReference type="SAM" id="MobiDB-lite"/>
    </source>
</evidence>
<evidence type="ECO:0000305" key="3"/>
<organism>
    <name type="scientific">Chlamydia trachomatis serovar D (strain ATCC VR-885 / DSM 19411 / UW-3/Cx)</name>
    <dbReference type="NCBI Taxonomy" id="272561"/>
    <lineage>
        <taxon>Bacteria</taxon>
        <taxon>Pseudomonadati</taxon>
        <taxon>Chlamydiota</taxon>
        <taxon>Chlamydiia</taxon>
        <taxon>Chlamydiales</taxon>
        <taxon>Chlamydiaceae</taxon>
        <taxon>Chlamydia/Chlamydophila group</taxon>
        <taxon>Chlamydia</taxon>
    </lineage>
</organism>
<proteinExistence type="inferred from homology"/>
<keyword id="KW-1003">Cell membrane</keyword>
<keyword id="KW-0472">Membrane</keyword>
<keyword id="KW-1185">Reference proteome</keyword>
<keyword id="KW-0812">Transmembrane</keyword>
<keyword id="KW-1133">Transmembrane helix</keyword>
<protein>
    <recommendedName>
        <fullName>Uncharacterized protein CT_006</fullName>
    </recommendedName>
</protein>
<sequence length="189" mass="20246">MPSTVAPIKGQDHFLNLVFPERVAAAYMSPLAQKYPKAALSIASLAGFLLGILKLITFPVLCAAGLFVFPIRGLISCLFHKSFQGCSGYVLATFLSLFSLALTIVGIVSCITWAPGFIFPMISVSIAFATVETCFQIYTHLFPALEHKPSSSLKIEIAAAKLPRSSSAPDLNYPSLPTQSASPSQRFSA</sequence>
<reference key="1">
    <citation type="journal article" date="1998" name="Science">
        <title>Genome sequence of an obligate intracellular pathogen of humans: Chlamydia trachomatis.</title>
        <authorList>
            <person name="Stephens R.S."/>
            <person name="Kalman S."/>
            <person name="Lammel C.J."/>
            <person name="Fan J."/>
            <person name="Marathe R."/>
            <person name="Aravind L."/>
            <person name="Mitchell W.P."/>
            <person name="Olinger L."/>
            <person name="Tatusov R.L."/>
            <person name="Zhao Q."/>
            <person name="Koonin E.V."/>
            <person name="Davis R.W."/>
        </authorList>
    </citation>
    <scope>NUCLEOTIDE SEQUENCE [LARGE SCALE GENOMIC DNA]</scope>
    <source>
        <strain>ATCC VR-885 / DSM 19411 / UW-3/Cx</strain>
    </source>
</reference>
<dbReference type="EMBL" id="AE001273">
    <property type="protein sequence ID" value="AAC67596.1"/>
    <property type="molecule type" value="Genomic_DNA"/>
</dbReference>
<dbReference type="PIR" id="A71569">
    <property type="entry name" value="A71569"/>
</dbReference>
<dbReference type="RefSeq" id="NP_219508.1">
    <property type="nucleotide sequence ID" value="NC_000117.1"/>
</dbReference>
<dbReference type="RefSeq" id="WP_009871352.1">
    <property type="nucleotide sequence ID" value="NC_000117.1"/>
</dbReference>
<dbReference type="SMR" id="O84009"/>
<dbReference type="IntAct" id="O84009">
    <property type="interactions" value="4"/>
</dbReference>
<dbReference type="MINT" id="O84009"/>
<dbReference type="STRING" id="272561.CT_006"/>
<dbReference type="EnsemblBacteria" id="AAC67596">
    <property type="protein sequence ID" value="AAC67596"/>
    <property type="gene ID" value="CT_006"/>
</dbReference>
<dbReference type="GeneID" id="884029"/>
<dbReference type="KEGG" id="ctr:CT_006"/>
<dbReference type="PATRIC" id="fig|272561.5.peg.7"/>
<dbReference type="HOGENOM" id="CLU_1432211_0_0_0"/>
<dbReference type="InParanoid" id="O84009"/>
<dbReference type="OrthoDB" id="19117at2"/>
<dbReference type="Proteomes" id="UP000000431">
    <property type="component" value="Chromosome"/>
</dbReference>
<dbReference type="GO" id="GO:0005886">
    <property type="term" value="C:plasma membrane"/>
    <property type="evidence" value="ECO:0007669"/>
    <property type="project" value="UniProtKB-SubCell"/>
</dbReference>
<dbReference type="InterPro" id="IPR035358">
    <property type="entry name" value="DUF5422"/>
</dbReference>
<dbReference type="Pfam" id="PF17459">
    <property type="entry name" value="DUF5422"/>
    <property type="match status" value="1"/>
</dbReference>
<comment type="subcellular location">
    <subcellularLocation>
        <location evidence="3">Cell membrane</location>
        <topology evidence="3">Multi-pass membrane protein</topology>
    </subcellularLocation>
</comment>
<comment type="similarity">
    <text evidence="3">Belongs to the chlamydial CPn_0442/CT_006/TC_0274 family.</text>
</comment>
<feature type="chain" id="PRO_0000218384" description="Uncharacterized protein CT_006">
    <location>
        <begin position="1"/>
        <end position="189"/>
    </location>
</feature>
<feature type="transmembrane region" description="Helical" evidence="1">
    <location>
        <begin position="49"/>
        <end position="69"/>
    </location>
</feature>
<feature type="transmembrane region" description="Helical" evidence="1">
    <location>
        <begin position="78"/>
        <end position="98"/>
    </location>
</feature>
<feature type="transmembrane region" description="Helical" evidence="1">
    <location>
        <begin position="102"/>
        <end position="122"/>
    </location>
</feature>
<feature type="transmembrane region" description="Helical" evidence="1">
    <location>
        <begin position="124"/>
        <end position="144"/>
    </location>
</feature>
<feature type="region of interest" description="Disordered" evidence="2">
    <location>
        <begin position="165"/>
        <end position="189"/>
    </location>
</feature>
<accession>O84009</accession>
<name>Y006_CHLTR</name>
<gene>
    <name type="ordered locus">CT_006</name>
</gene>